<evidence type="ECO:0000255" key="1">
    <source>
        <dbReference type="HAMAP-Rule" id="MF_00038"/>
    </source>
</evidence>
<feature type="chain" id="PRO_1000003052" description="Phospho-N-acetylmuramoyl-pentapeptide-transferase">
    <location>
        <begin position="1"/>
        <end position="360"/>
    </location>
</feature>
<feature type="transmembrane region" description="Helical" evidence="1">
    <location>
        <begin position="26"/>
        <end position="46"/>
    </location>
</feature>
<feature type="transmembrane region" description="Helical" evidence="1">
    <location>
        <begin position="70"/>
        <end position="90"/>
    </location>
</feature>
<feature type="transmembrane region" description="Helical" evidence="1">
    <location>
        <begin position="97"/>
        <end position="117"/>
    </location>
</feature>
<feature type="transmembrane region" description="Helical" evidence="1">
    <location>
        <begin position="134"/>
        <end position="154"/>
    </location>
</feature>
<feature type="transmembrane region" description="Helical" evidence="1">
    <location>
        <begin position="167"/>
        <end position="187"/>
    </location>
</feature>
<feature type="transmembrane region" description="Helical" evidence="1">
    <location>
        <begin position="199"/>
        <end position="219"/>
    </location>
</feature>
<feature type="transmembrane region" description="Helical" evidence="1">
    <location>
        <begin position="236"/>
        <end position="256"/>
    </location>
</feature>
<feature type="transmembrane region" description="Helical" evidence="1">
    <location>
        <begin position="263"/>
        <end position="283"/>
    </location>
</feature>
<feature type="transmembrane region" description="Helical" evidence="1">
    <location>
        <begin position="288"/>
        <end position="308"/>
    </location>
</feature>
<feature type="transmembrane region" description="Helical" evidence="1">
    <location>
        <begin position="338"/>
        <end position="358"/>
    </location>
</feature>
<keyword id="KW-0131">Cell cycle</keyword>
<keyword id="KW-0132">Cell division</keyword>
<keyword id="KW-0997">Cell inner membrane</keyword>
<keyword id="KW-1003">Cell membrane</keyword>
<keyword id="KW-0133">Cell shape</keyword>
<keyword id="KW-0961">Cell wall biogenesis/degradation</keyword>
<keyword id="KW-0460">Magnesium</keyword>
<keyword id="KW-0472">Membrane</keyword>
<keyword id="KW-0479">Metal-binding</keyword>
<keyword id="KW-0573">Peptidoglycan synthesis</keyword>
<keyword id="KW-1185">Reference proteome</keyword>
<keyword id="KW-0808">Transferase</keyword>
<keyword id="KW-0812">Transmembrane</keyword>
<keyword id="KW-1133">Transmembrane helix</keyword>
<sequence>MLLWLAEYLQQYISAFAVVKYLTFRAILGVMTALGLSLLLGPWVINKLNKLQIGQSIRDDGPESHLVKSGTPTMGGTLILFAIVFATLLWSDLTNRYVLAVLFVTLSFGLVGWVDDYRKVVQKNSKGLPAKWKYFWQSLAGFTVAYGLYVTAQIPEETTLYIPFFKGVALELGVFYIILTYFMVVGFSNAVNLTDGLDGLAIMPTVMVGSALGIIAYLVGNANFSAYLQIPYVPGAGELVVYCAALAGAGLGFLWFNTYPAQVFMGDVGALALGAALGIIAVIVRHEIVFIIMSGIFVMETVSVILQVASFKLTGRRIFRMAPLHHHFELKGWPEPRVIVRFWIITVMLVLFGLATLKLR</sequence>
<dbReference type="EC" id="2.7.8.13" evidence="1"/>
<dbReference type="EMBL" id="CP000282">
    <property type="protein sequence ID" value="ABD80107.1"/>
    <property type="molecule type" value="Genomic_DNA"/>
</dbReference>
<dbReference type="RefSeq" id="WP_011467328.1">
    <property type="nucleotide sequence ID" value="NC_007912.1"/>
</dbReference>
<dbReference type="SMR" id="Q21MH2"/>
<dbReference type="STRING" id="203122.Sde_0845"/>
<dbReference type="GeneID" id="98612527"/>
<dbReference type="KEGG" id="sde:Sde_0845"/>
<dbReference type="eggNOG" id="COG0472">
    <property type="taxonomic scope" value="Bacteria"/>
</dbReference>
<dbReference type="HOGENOM" id="CLU_023982_0_0_6"/>
<dbReference type="OrthoDB" id="9805475at2"/>
<dbReference type="UniPathway" id="UPA00219"/>
<dbReference type="Proteomes" id="UP000001947">
    <property type="component" value="Chromosome"/>
</dbReference>
<dbReference type="GO" id="GO:0005886">
    <property type="term" value="C:plasma membrane"/>
    <property type="evidence" value="ECO:0007669"/>
    <property type="project" value="UniProtKB-SubCell"/>
</dbReference>
<dbReference type="GO" id="GO:0046872">
    <property type="term" value="F:metal ion binding"/>
    <property type="evidence" value="ECO:0007669"/>
    <property type="project" value="UniProtKB-KW"/>
</dbReference>
<dbReference type="GO" id="GO:0008963">
    <property type="term" value="F:phospho-N-acetylmuramoyl-pentapeptide-transferase activity"/>
    <property type="evidence" value="ECO:0007669"/>
    <property type="project" value="UniProtKB-UniRule"/>
</dbReference>
<dbReference type="GO" id="GO:0051992">
    <property type="term" value="F:UDP-N-acetylmuramoyl-L-alanyl-D-glutamyl-meso-2,6-diaminopimelyl-D-alanyl-D-alanine:undecaprenyl-phosphate transferase activity"/>
    <property type="evidence" value="ECO:0007669"/>
    <property type="project" value="RHEA"/>
</dbReference>
<dbReference type="GO" id="GO:0051301">
    <property type="term" value="P:cell division"/>
    <property type="evidence" value="ECO:0007669"/>
    <property type="project" value="UniProtKB-KW"/>
</dbReference>
<dbReference type="GO" id="GO:0071555">
    <property type="term" value="P:cell wall organization"/>
    <property type="evidence" value="ECO:0007669"/>
    <property type="project" value="UniProtKB-KW"/>
</dbReference>
<dbReference type="GO" id="GO:0009252">
    <property type="term" value="P:peptidoglycan biosynthetic process"/>
    <property type="evidence" value="ECO:0007669"/>
    <property type="project" value="UniProtKB-UniRule"/>
</dbReference>
<dbReference type="GO" id="GO:0008360">
    <property type="term" value="P:regulation of cell shape"/>
    <property type="evidence" value="ECO:0007669"/>
    <property type="project" value="UniProtKB-KW"/>
</dbReference>
<dbReference type="CDD" id="cd06852">
    <property type="entry name" value="GT_MraY"/>
    <property type="match status" value="1"/>
</dbReference>
<dbReference type="HAMAP" id="MF_00038">
    <property type="entry name" value="MraY"/>
    <property type="match status" value="1"/>
</dbReference>
<dbReference type="InterPro" id="IPR000715">
    <property type="entry name" value="Glycosyl_transferase_4"/>
</dbReference>
<dbReference type="InterPro" id="IPR003524">
    <property type="entry name" value="PNAcMuramoyl-5peptid_Trfase"/>
</dbReference>
<dbReference type="InterPro" id="IPR018480">
    <property type="entry name" value="PNAcMuramoyl-5peptid_Trfase_CS"/>
</dbReference>
<dbReference type="NCBIfam" id="TIGR00445">
    <property type="entry name" value="mraY"/>
    <property type="match status" value="1"/>
</dbReference>
<dbReference type="PANTHER" id="PTHR22926">
    <property type="entry name" value="PHOSPHO-N-ACETYLMURAMOYL-PENTAPEPTIDE-TRANSFERASE"/>
    <property type="match status" value="1"/>
</dbReference>
<dbReference type="PANTHER" id="PTHR22926:SF5">
    <property type="entry name" value="PHOSPHO-N-ACETYLMURAMOYL-PENTAPEPTIDE-TRANSFERASE HOMOLOG"/>
    <property type="match status" value="1"/>
</dbReference>
<dbReference type="Pfam" id="PF00953">
    <property type="entry name" value="Glycos_transf_4"/>
    <property type="match status" value="1"/>
</dbReference>
<dbReference type="Pfam" id="PF10555">
    <property type="entry name" value="MraY_sig1"/>
    <property type="match status" value="1"/>
</dbReference>
<dbReference type="PROSITE" id="PS01348">
    <property type="entry name" value="MRAY_2"/>
    <property type="match status" value="1"/>
</dbReference>
<organism>
    <name type="scientific">Saccharophagus degradans (strain 2-40 / ATCC 43961 / DSM 17024)</name>
    <dbReference type="NCBI Taxonomy" id="203122"/>
    <lineage>
        <taxon>Bacteria</taxon>
        <taxon>Pseudomonadati</taxon>
        <taxon>Pseudomonadota</taxon>
        <taxon>Gammaproteobacteria</taxon>
        <taxon>Cellvibrionales</taxon>
        <taxon>Cellvibrionaceae</taxon>
        <taxon>Saccharophagus</taxon>
    </lineage>
</organism>
<accession>Q21MH2</accession>
<proteinExistence type="inferred from homology"/>
<reference key="1">
    <citation type="journal article" date="2008" name="PLoS Genet.">
        <title>Complete genome sequence of the complex carbohydrate-degrading marine bacterium, Saccharophagus degradans strain 2-40 T.</title>
        <authorList>
            <person name="Weiner R.M."/>
            <person name="Taylor L.E. II"/>
            <person name="Henrissat B."/>
            <person name="Hauser L."/>
            <person name="Land M."/>
            <person name="Coutinho P.M."/>
            <person name="Rancurel C."/>
            <person name="Saunders E.H."/>
            <person name="Longmire A.G."/>
            <person name="Zhang H."/>
            <person name="Bayer E.A."/>
            <person name="Gilbert H.J."/>
            <person name="Larimer F."/>
            <person name="Zhulin I.B."/>
            <person name="Ekborg N.A."/>
            <person name="Lamed R."/>
            <person name="Richardson P.M."/>
            <person name="Borovok I."/>
            <person name="Hutcheson S."/>
        </authorList>
    </citation>
    <scope>NUCLEOTIDE SEQUENCE [LARGE SCALE GENOMIC DNA]</scope>
    <source>
        <strain>2-40 / ATCC 43961 / DSM 17024</strain>
    </source>
</reference>
<gene>
    <name evidence="1" type="primary">mraY</name>
    <name type="ordered locus">Sde_0845</name>
</gene>
<name>MRAY_SACD2</name>
<comment type="function">
    <text evidence="1">Catalyzes the initial step of the lipid cycle reactions in the biosynthesis of the cell wall peptidoglycan: transfers peptidoglycan precursor phospho-MurNAc-pentapeptide from UDP-MurNAc-pentapeptide onto the lipid carrier undecaprenyl phosphate, yielding undecaprenyl-pyrophosphoryl-MurNAc-pentapeptide, known as lipid I.</text>
</comment>
<comment type="catalytic activity">
    <reaction evidence="1">
        <text>UDP-N-acetyl-alpha-D-muramoyl-L-alanyl-gamma-D-glutamyl-meso-2,6-diaminopimeloyl-D-alanyl-D-alanine + di-trans,octa-cis-undecaprenyl phosphate = di-trans,octa-cis-undecaprenyl diphospho-N-acetyl-alpha-D-muramoyl-L-alanyl-D-glutamyl-meso-2,6-diaminopimeloyl-D-alanyl-D-alanine + UMP</text>
        <dbReference type="Rhea" id="RHEA:28386"/>
        <dbReference type="ChEBI" id="CHEBI:57865"/>
        <dbReference type="ChEBI" id="CHEBI:60392"/>
        <dbReference type="ChEBI" id="CHEBI:61386"/>
        <dbReference type="ChEBI" id="CHEBI:61387"/>
        <dbReference type="EC" id="2.7.8.13"/>
    </reaction>
</comment>
<comment type="cofactor">
    <cofactor evidence="1">
        <name>Mg(2+)</name>
        <dbReference type="ChEBI" id="CHEBI:18420"/>
    </cofactor>
</comment>
<comment type="pathway">
    <text evidence="1">Cell wall biogenesis; peptidoglycan biosynthesis.</text>
</comment>
<comment type="subcellular location">
    <subcellularLocation>
        <location evidence="1">Cell inner membrane</location>
        <topology evidence="1">Multi-pass membrane protein</topology>
    </subcellularLocation>
</comment>
<comment type="similarity">
    <text evidence="1">Belongs to the glycosyltransferase 4 family. MraY subfamily.</text>
</comment>
<protein>
    <recommendedName>
        <fullName evidence="1">Phospho-N-acetylmuramoyl-pentapeptide-transferase</fullName>
        <ecNumber evidence="1">2.7.8.13</ecNumber>
    </recommendedName>
    <alternativeName>
        <fullName evidence="1">UDP-MurNAc-pentapeptide phosphotransferase</fullName>
    </alternativeName>
</protein>